<protein>
    <recommendedName>
        <fullName evidence="1">Taurine import ATP-binding protein TauB</fullName>
        <ecNumber evidence="1">7.6.2.7</ecNumber>
    </recommendedName>
</protein>
<accession>Q8X5I6</accession>
<accession>Q7AH36</accession>
<keyword id="KW-0067">ATP-binding</keyword>
<keyword id="KW-0997">Cell inner membrane</keyword>
<keyword id="KW-1003">Cell membrane</keyword>
<keyword id="KW-0472">Membrane</keyword>
<keyword id="KW-0547">Nucleotide-binding</keyword>
<keyword id="KW-1185">Reference proteome</keyword>
<keyword id="KW-1278">Translocase</keyword>
<keyword id="KW-0813">Transport</keyword>
<comment type="function">
    <text evidence="1">Part of the ABC transporter complex TauABC involved in taurine import. Responsible for energy coupling to the transport system.</text>
</comment>
<comment type="catalytic activity">
    <reaction evidence="1">
        <text>taurine(out) + ATP + H2O = taurine(in) + ADP + phosphate + H(+)</text>
        <dbReference type="Rhea" id="RHEA:14613"/>
        <dbReference type="ChEBI" id="CHEBI:15377"/>
        <dbReference type="ChEBI" id="CHEBI:15378"/>
        <dbReference type="ChEBI" id="CHEBI:30616"/>
        <dbReference type="ChEBI" id="CHEBI:43474"/>
        <dbReference type="ChEBI" id="CHEBI:456216"/>
        <dbReference type="ChEBI" id="CHEBI:507393"/>
        <dbReference type="EC" id="7.6.2.7"/>
    </reaction>
</comment>
<comment type="subunit">
    <text evidence="1">The complex is composed of two ATP-binding proteins (TauB), two transmembrane proteins (TauC) and a solute-binding protein (TauA).</text>
</comment>
<comment type="subcellular location">
    <subcellularLocation>
        <location evidence="1">Cell inner membrane</location>
        <topology evidence="1">Peripheral membrane protein</topology>
    </subcellularLocation>
</comment>
<comment type="similarity">
    <text evidence="1">Belongs to the ABC transporter superfamily. Taurine importer (TC 3.A.1.17.1) family.</text>
</comment>
<name>TAUB_ECO57</name>
<reference key="1">
    <citation type="journal article" date="2001" name="Nature">
        <title>Genome sequence of enterohaemorrhagic Escherichia coli O157:H7.</title>
        <authorList>
            <person name="Perna N.T."/>
            <person name="Plunkett G. III"/>
            <person name="Burland V."/>
            <person name="Mau B."/>
            <person name="Glasner J.D."/>
            <person name="Rose D.J."/>
            <person name="Mayhew G.F."/>
            <person name="Evans P.S."/>
            <person name="Gregor J."/>
            <person name="Kirkpatrick H.A."/>
            <person name="Posfai G."/>
            <person name="Hackett J."/>
            <person name="Klink S."/>
            <person name="Boutin A."/>
            <person name="Shao Y."/>
            <person name="Miller L."/>
            <person name="Grotbeck E.J."/>
            <person name="Davis N.W."/>
            <person name="Lim A."/>
            <person name="Dimalanta E.T."/>
            <person name="Potamousis K."/>
            <person name="Apodaca J."/>
            <person name="Anantharaman T.S."/>
            <person name="Lin J."/>
            <person name="Yen G."/>
            <person name="Schwartz D.C."/>
            <person name="Welch R.A."/>
            <person name="Blattner F.R."/>
        </authorList>
    </citation>
    <scope>NUCLEOTIDE SEQUENCE [LARGE SCALE GENOMIC DNA]</scope>
    <source>
        <strain>O157:H7 / EDL933 / ATCC 700927 / EHEC</strain>
    </source>
</reference>
<reference key="2">
    <citation type="journal article" date="2001" name="DNA Res.">
        <title>Complete genome sequence of enterohemorrhagic Escherichia coli O157:H7 and genomic comparison with a laboratory strain K-12.</title>
        <authorList>
            <person name="Hayashi T."/>
            <person name="Makino K."/>
            <person name="Ohnishi M."/>
            <person name="Kurokawa K."/>
            <person name="Ishii K."/>
            <person name="Yokoyama K."/>
            <person name="Han C.-G."/>
            <person name="Ohtsubo E."/>
            <person name="Nakayama K."/>
            <person name="Murata T."/>
            <person name="Tanaka M."/>
            <person name="Tobe T."/>
            <person name="Iida T."/>
            <person name="Takami H."/>
            <person name="Honda T."/>
            <person name="Sasakawa C."/>
            <person name="Ogasawara N."/>
            <person name="Yasunaga T."/>
            <person name="Kuhara S."/>
            <person name="Shiba T."/>
            <person name="Hattori M."/>
            <person name="Shinagawa H."/>
        </authorList>
    </citation>
    <scope>NUCLEOTIDE SEQUENCE [LARGE SCALE GENOMIC DNA]</scope>
    <source>
        <strain>O157:H7 / Sakai / RIMD 0509952 / EHEC</strain>
    </source>
</reference>
<dbReference type="EC" id="7.6.2.7" evidence="1"/>
<dbReference type="EMBL" id="AE005174">
    <property type="protein sequence ID" value="AAG54716.1"/>
    <property type="molecule type" value="Genomic_DNA"/>
</dbReference>
<dbReference type="EMBL" id="BA000007">
    <property type="protein sequence ID" value="BAB33843.1"/>
    <property type="molecule type" value="Genomic_DNA"/>
</dbReference>
<dbReference type="PIR" id="D90681">
    <property type="entry name" value="D90681"/>
</dbReference>
<dbReference type="PIR" id="H85531">
    <property type="entry name" value="H85531"/>
</dbReference>
<dbReference type="RefSeq" id="NP_308447.1">
    <property type="nucleotide sequence ID" value="NC_002695.1"/>
</dbReference>
<dbReference type="RefSeq" id="WP_000939394.1">
    <property type="nucleotide sequence ID" value="NZ_VOAI01000005.1"/>
</dbReference>
<dbReference type="SMR" id="Q8X5I6"/>
<dbReference type="STRING" id="155864.Z0465"/>
<dbReference type="GeneID" id="914522"/>
<dbReference type="KEGG" id="ece:Z0465"/>
<dbReference type="KEGG" id="ecs:ECs_0420"/>
<dbReference type="PATRIC" id="fig|386585.9.peg.515"/>
<dbReference type="eggNOG" id="COG4525">
    <property type="taxonomic scope" value="Bacteria"/>
</dbReference>
<dbReference type="HOGENOM" id="CLU_000604_1_22_6"/>
<dbReference type="OMA" id="VEIFGWK"/>
<dbReference type="Proteomes" id="UP000000558">
    <property type="component" value="Chromosome"/>
</dbReference>
<dbReference type="Proteomes" id="UP000002519">
    <property type="component" value="Chromosome"/>
</dbReference>
<dbReference type="GO" id="GO:0005886">
    <property type="term" value="C:plasma membrane"/>
    <property type="evidence" value="ECO:0007669"/>
    <property type="project" value="UniProtKB-SubCell"/>
</dbReference>
<dbReference type="GO" id="GO:0015411">
    <property type="term" value="F:ABC-type taurine transporter transporter activity"/>
    <property type="evidence" value="ECO:0007669"/>
    <property type="project" value="UniProtKB-EC"/>
</dbReference>
<dbReference type="GO" id="GO:0005524">
    <property type="term" value="F:ATP binding"/>
    <property type="evidence" value="ECO:0007669"/>
    <property type="project" value="UniProtKB-KW"/>
</dbReference>
<dbReference type="GO" id="GO:0016887">
    <property type="term" value="F:ATP hydrolysis activity"/>
    <property type="evidence" value="ECO:0007669"/>
    <property type="project" value="InterPro"/>
</dbReference>
<dbReference type="CDD" id="cd03293">
    <property type="entry name" value="ABC_NrtD_SsuB_transporters"/>
    <property type="match status" value="1"/>
</dbReference>
<dbReference type="FunFam" id="3.40.50.300:FF:000653">
    <property type="entry name" value="Aliphatic sulfonates import ATP-binding protein SsuB"/>
    <property type="match status" value="1"/>
</dbReference>
<dbReference type="Gene3D" id="3.40.50.300">
    <property type="entry name" value="P-loop containing nucleotide triphosphate hydrolases"/>
    <property type="match status" value="1"/>
</dbReference>
<dbReference type="InterPro" id="IPR003593">
    <property type="entry name" value="AAA+_ATPase"/>
</dbReference>
<dbReference type="InterPro" id="IPR003439">
    <property type="entry name" value="ABC_transporter-like_ATP-bd"/>
</dbReference>
<dbReference type="InterPro" id="IPR017871">
    <property type="entry name" value="ABC_transporter-like_CS"/>
</dbReference>
<dbReference type="InterPro" id="IPR050166">
    <property type="entry name" value="ABC_transporter_ATP-bind"/>
</dbReference>
<dbReference type="InterPro" id="IPR027417">
    <property type="entry name" value="P-loop_NTPase"/>
</dbReference>
<dbReference type="NCBIfam" id="NF008421">
    <property type="entry name" value="PRK11248.1"/>
    <property type="match status" value="1"/>
</dbReference>
<dbReference type="PANTHER" id="PTHR42788:SF18">
    <property type="entry name" value="TAURINE IMPORT ATP-BINDING PROTEIN TAUB"/>
    <property type="match status" value="1"/>
</dbReference>
<dbReference type="PANTHER" id="PTHR42788">
    <property type="entry name" value="TAURINE IMPORT ATP-BINDING PROTEIN-RELATED"/>
    <property type="match status" value="1"/>
</dbReference>
<dbReference type="Pfam" id="PF00005">
    <property type="entry name" value="ABC_tran"/>
    <property type="match status" value="1"/>
</dbReference>
<dbReference type="SMART" id="SM00382">
    <property type="entry name" value="AAA"/>
    <property type="match status" value="1"/>
</dbReference>
<dbReference type="SUPFAM" id="SSF52540">
    <property type="entry name" value="P-loop containing nucleoside triphosphate hydrolases"/>
    <property type="match status" value="1"/>
</dbReference>
<dbReference type="PROSITE" id="PS00211">
    <property type="entry name" value="ABC_TRANSPORTER_1"/>
    <property type="match status" value="1"/>
</dbReference>
<dbReference type="PROSITE" id="PS50893">
    <property type="entry name" value="ABC_TRANSPORTER_2"/>
    <property type="match status" value="1"/>
</dbReference>
<dbReference type="PROSITE" id="PS51250">
    <property type="entry name" value="TAUB"/>
    <property type="match status" value="1"/>
</dbReference>
<proteinExistence type="inferred from homology"/>
<feature type="chain" id="PRO_0000093008" description="Taurine import ATP-binding protein TauB">
    <location>
        <begin position="1"/>
        <end position="255"/>
    </location>
</feature>
<feature type="domain" description="ABC transporter" evidence="1">
    <location>
        <begin position="2"/>
        <end position="229"/>
    </location>
</feature>
<feature type="binding site" evidence="1">
    <location>
        <begin position="34"/>
        <end position="41"/>
    </location>
    <ligand>
        <name>ATP</name>
        <dbReference type="ChEBI" id="CHEBI:30616"/>
    </ligand>
</feature>
<sequence>MLQISHLYADYGGKPVLEDINLTLESGELLVVLGPSGCGKTTLLNLIAGFVPYQHGSIQLAGKRIEGPGAERGVVFQNEGLLPWRNVQDNVAFGLQLAGIEKMQRLEIAHQMLKKVGLEGAEKRYIWQLSGGQRQRVGIARALAANPQLLLLDEPFGALDAFTRDQMQTLLLKLWQETGKQVLLITHDIEEAVFMATELVLLSPGPGRVLERLPLNFARRFVAGESSRSIKSDPQFIAMREYVLSRVFEQREAFS</sequence>
<gene>
    <name evidence="1" type="primary">tauB</name>
    <name type="ordered locus">Z0465</name>
    <name type="ordered locus">ECs0420</name>
</gene>
<evidence type="ECO:0000255" key="1">
    <source>
        <dbReference type="HAMAP-Rule" id="MF_01714"/>
    </source>
</evidence>
<organism>
    <name type="scientific">Escherichia coli O157:H7</name>
    <dbReference type="NCBI Taxonomy" id="83334"/>
    <lineage>
        <taxon>Bacteria</taxon>
        <taxon>Pseudomonadati</taxon>
        <taxon>Pseudomonadota</taxon>
        <taxon>Gammaproteobacteria</taxon>
        <taxon>Enterobacterales</taxon>
        <taxon>Enterobacteriaceae</taxon>
        <taxon>Escherichia</taxon>
    </lineage>
</organism>